<evidence type="ECO:0000255" key="1"/>
<evidence type="ECO:0000305" key="2"/>
<reference key="1">
    <citation type="journal article" date="2004" name="J. Gen. Virol.">
        <title>Genetic content of wild-type human cytomegalovirus.</title>
        <authorList>
            <person name="Dolan A."/>
            <person name="Cunningham C."/>
            <person name="Hector R.D."/>
            <person name="Hassan-Walker A.F."/>
            <person name="Lee L."/>
            <person name="Addison C."/>
            <person name="Dargan D.J."/>
            <person name="McGeoch D.J."/>
            <person name="Gatherer D."/>
            <person name="Emery V.C."/>
            <person name="Griffiths P.D."/>
            <person name="Sinzger C."/>
            <person name="McSharry B.P."/>
            <person name="Wilkinson G.W.G."/>
            <person name="Davison A.J."/>
        </authorList>
    </citation>
    <scope>NUCLEOTIDE SEQUENCE [LARGE SCALE GENOMIC DNA]</scope>
</reference>
<protein>
    <recommendedName>
        <fullName>Transmembrane protein US19</fullName>
    </recommendedName>
</protein>
<gene>
    <name type="primary">US19</name>
</gene>
<accession>F5HAR3</accession>
<keyword id="KW-1043">Host membrane</keyword>
<keyword id="KW-0426">Late protein</keyword>
<keyword id="KW-0472">Membrane</keyword>
<keyword id="KW-1185">Reference proteome</keyword>
<keyword id="KW-0812">Transmembrane</keyword>
<keyword id="KW-1133">Transmembrane helix</keyword>
<organism>
    <name type="scientific">Human cytomegalovirus (strain Merlin)</name>
    <name type="common">HHV-5</name>
    <name type="synonym">Human herpesvirus 5</name>
    <dbReference type="NCBI Taxonomy" id="295027"/>
    <lineage>
        <taxon>Viruses</taxon>
        <taxon>Duplodnaviria</taxon>
        <taxon>Heunggongvirae</taxon>
        <taxon>Peploviricota</taxon>
        <taxon>Herviviricetes</taxon>
        <taxon>Herpesvirales</taxon>
        <taxon>Orthoherpesviridae</taxon>
        <taxon>Betaherpesvirinae</taxon>
        <taxon>Cytomegalovirus</taxon>
        <taxon>Cytomegalovirus humanbeta5</taxon>
        <taxon>Human cytomegalovirus</taxon>
    </lineage>
</organism>
<organismHost>
    <name type="scientific">Homo sapiens</name>
    <name type="common">Human</name>
    <dbReference type="NCBI Taxonomy" id="9606"/>
</organismHost>
<dbReference type="EMBL" id="AY446894">
    <property type="protein sequence ID" value="AAR31708.1"/>
    <property type="molecule type" value="Genomic_DNA"/>
</dbReference>
<dbReference type="RefSeq" id="YP_081604.1">
    <property type="nucleotide sequence ID" value="NC_006273.2"/>
</dbReference>
<dbReference type="DNASU" id="3077522"/>
<dbReference type="GeneID" id="3077522"/>
<dbReference type="KEGG" id="vg:3077522"/>
<dbReference type="Reactome" id="R-HSA-9609690">
    <property type="pathway name" value="HCMV Early Events"/>
</dbReference>
<dbReference type="Proteomes" id="UP000000938">
    <property type="component" value="Segment"/>
</dbReference>
<dbReference type="GO" id="GO:0033644">
    <property type="term" value="C:host cell membrane"/>
    <property type="evidence" value="ECO:0007669"/>
    <property type="project" value="UniProtKB-SubCell"/>
</dbReference>
<dbReference type="GO" id="GO:0016020">
    <property type="term" value="C:membrane"/>
    <property type="evidence" value="ECO:0007669"/>
    <property type="project" value="UniProtKB-KW"/>
</dbReference>
<name>US19_HCMVM</name>
<comment type="subcellular location">
    <subcellularLocation>
        <location evidence="2">Host membrane</location>
        <topology evidence="2">Multi-pass membrane protein</topology>
    </subcellularLocation>
</comment>
<comment type="developmental stage">
    <text>Expressed 34 hours post-infection.</text>
</comment>
<comment type="similarity">
    <text evidence="2">Belongs to the cytomegalovirus US12 family.</text>
</comment>
<feature type="chain" id="PRO_0000416727" description="Transmembrane protein US19">
    <location>
        <begin position="1"/>
        <end position="240"/>
    </location>
</feature>
<feature type="transmembrane region" description="Helical" evidence="1">
    <location>
        <begin position="29"/>
        <end position="49"/>
    </location>
</feature>
<feature type="transmembrane region" description="Helical" evidence="1">
    <location>
        <begin position="64"/>
        <end position="84"/>
    </location>
</feature>
<feature type="transmembrane region" description="Helical" evidence="1">
    <location>
        <begin position="96"/>
        <end position="116"/>
    </location>
</feature>
<feature type="transmembrane region" description="Helical" evidence="1">
    <location>
        <begin position="123"/>
        <end position="143"/>
    </location>
</feature>
<feature type="transmembrane region" description="Helical" evidence="1">
    <location>
        <begin position="153"/>
        <end position="173"/>
    </location>
</feature>
<feature type="transmembrane region" description="Helical" evidence="1">
    <location>
        <begin position="176"/>
        <end position="196"/>
    </location>
</feature>
<feature type="transmembrane region" description="Helical" evidence="1">
    <location>
        <begin position="218"/>
        <end position="238"/>
    </location>
</feature>
<sequence length="240" mass="26413">MLHVVPLEWTVEEVVPYLERLAVWLRASVLVAFQLTATVALSVLSWWLMPPPVAELCERGRDDDPPSLSHLSLVVPVGCLFLLLRGPSIDRCPRKLPLLLAYCLPHALAFLTLLMCQPSPQAFVGAALLALAVDLSCLGASLLGCDPGASLRRLWLPSVLSLLCATALGLWLLRAAAPFFLGLHATTLLTVTLMLIHDLSLITCQSSFPESFQPSLRLYVENVALFIGMYHLLRLWLWSP</sequence>
<proteinExistence type="evidence at transcript level"/>